<reference key="1">
    <citation type="journal article" date="2004" name="Proc. Natl. Acad. Sci. U.S.A.">
        <title>Complete genomes of two clinical Staphylococcus aureus strains: evidence for the rapid evolution of virulence and drug resistance.</title>
        <authorList>
            <person name="Holden M.T.G."/>
            <person name="Feil E.J."/>
            <person name="Lindsay J.A."/>
            <person name="Peacock S.J."/>
            <person name="Day N.P.J."/>
            <person name="Enright M.C."/>
            <person name="Foster T.J."/>
            <person name="Moore C.E."/>
            <person name="Hurst L."/>
            <person name="Atkin R."/>
            <person name="Barron A."/>
            <person name="Bason N."/>
            <person name="Bentley S.D."/>
            <person name="Chillingworth C."/>
            <person name="Chillingworth T."/>
            <person name="Churcher C."/>
            <person name="Clark L."/>
            <person name="Corton C."/>
            <person name="Cronin A."/>
            <person name="Doggett J."/>
            <person name="Dowd L."/>
            <person name="Feltwell T."/>
            <person name="Hance Z."/>
            <person name="Harris B."/>
            <person name="Hauser H."/>
            <person name="Holroyd S."/>
            <person name="Jagels K."/>
            <person name="James K.D."/>
            <person name="Lennard N."/>
            <person name="Line A."/>
            <person name="Mayes R."/>
            <person name="Moule S."/>
            <person name="Mungall K."/>
            <person name="Ormond D."/>
            <person name="Quail M.A."/>
            <person name="Rabbinowitsch E."/>
            <person name="Rutherford K.M."/>
            <person name="Sanders M."/>
            <person name="Sharp S."/>
            <person name="Simmonds M."/>
            <person name="Stevens K."/>
            <person name="Whitehead S."/>
            <person name="Barrell B.G."/>
            <person name="Spratt B.G."/>
            <person name="Parkhill J."/>
        </authorList>
    </citation>
    <scope>NUCLEOTIDE SEQUENCE [LARGE SCALE GENOMIC DNA]</scope>
    <source>
        <strain>MSSA476</strain>
    </source>
</reference>
<proteinExistence type="inferred from homology"/>
<name>SIGA_STAAS</name>
<sequence>MSDNTVKIKKQTIDPTLTLEDVKKQLIEKGKKEGHLSHEEIAEKLQNFDIDSDQMDDFFDQLNDNDISLVNEKDSSDTDEKLNPSDLSAPPGVKINDPVRMYLKEIGRVNLLSAQEEIELAKRIEQGDEVAKSRLAEANLRLVVSIAKRYVGRGMLFLDLIQEGNMGLIKAVEKFDFNKGFKFSTYATWWIRQAITRAIADQARTIRIPVHMVETINKLIRVQRQLLQDLGRDPAPEEIGEEMDLPAEKVREILKIAQEPVSLETPIGEEDDSHLGDFIEDQEAQSPSDHAAYELLKEQLEDVLDTLTDREENVLRLRFGLDDGRTRTLEEVGKVFGVTRERIRQIEAKALRKLRHPSRSKRLKDFMD</sequence>
<organism>
    <name type="scientific">Staphylococcus aureus (strain MSSA476)</name>
    <dbReference type="NCBI Taxonomy" id="282459"/>
    <lineage>
        <taxon>Bacteria</taxon>
        <taxon>Bacillati</taxon>
        <taxon>Bacillota</taxon>
        <taxon>Bacilli</taxon>
        <taxon>Bacillales</taxon>
        <taxon>Staphylococcaceae</taxon>
        <taxon>Staphylococcus</taxon>
    </lineage>
</organism>
<dbReference type="EMBL" id="BX571857">
    <property type="protein sequence ID" value="CAG43300.1"/>
    <property type="molecule type" value="Genomic_DNA"/>
</dbReference>
<dbReference type="RefSeq" id="WP_001283055.1">
    <property type="nucleotide sequence ID" value="NC_002953.3"/>
</dbReference>
<dbReference type="SMR" id="Q6G905"/>
<dbReference type="GeneID" id="98345932"/>
<dbReference type="KEGG" id="sas:SAS1499"/>
<dbReference type="HOGENOM" id="CLU_014793_3_3_9"/>
<dbReference type="GO" id="GO:0005737">
    <property type="term" value="C:cytoplasm"/>
    <property type="evidence" value="ECO:0007669"/>
    <property type="project" value="UniProtKB-SubCell"/>
</dbReference>
<dbReference type="GO" id="GO:0003677">
    <property type="term" value="F:DNA binding"/>
    <property type="evidence" value="ECO:0007669"/>
    <property type="project" value="UniProtKB-UniRule"/>
</dbReference>
<dbReference type="GO" id="GO:0016987">
    <property type="term" value="F:sigma factor activity"/>
    <property type="evidence" value="ECO:0007669"/>
    <property type="project" value="UniProtKB-UniRule"/>
</dbReference>
<dbReference type="GO" id="GO:0006352">
    <property type="term" value="P:DNA-templated transcription initiation"/>
    <property type="evidence" value="ECO:0007669"/>
    <property type="project" value="UniProtKB-UniRule"/>
</dbReference>
<dbReference type="CDD" id="cd06171">
    <property type="entry name" value="Sigma70_r4"/>
    <property type="match status" value="1"/>
</dbReference>
<dbReference type="FunFam" id="1.10.10.10:FF:000002">
    <property type="entry name" value="RNA polymerase sigma factor SigA"/>
    <property type="match status" value="1"/>
</dbReference>
<dbReference type="FunFam" id="1.10.10.10:FF:000004">
    <property type="entry name" value="RNA polymerase sigma factor SigA"/>
    <property type="match status" value="1"/>
</dbReference>
<dbReference type="FunFam" id="1.10.601.10:FF:000001">
    <property type="entry name" value="RNA polymerase sigma factor SigA"/>
    <property type="match status" value="1"/>
</dbReference>
<dbReference type="Gene3D" id="1.10.601.10">
    <property type="entry name" value="RNA Polymerase Primary Sigma Factor"/>
    <property type="match status" value="2"/>
</dbReference>
<dbReference type="Gene3D" id="1.10.220.120">
    <property type="entry name" value="Sigma-70 factor, region 1.1"/>
    <property type="match status" value="1"/>
</dbReference>
<dbReference type="Gene3D" id="1.10.10.10">
    <property type="entry name" value="Winged helix-like DNA-binding domain superfamily/Winged helix DNA-binding domain"/>
    <property type="match status" value="2"/>
</dbReference>
<dbReference type="HAMAP" id="MF_00963">
    <property type="entry name" value="Sigma70_RpoD_SigA"/>
    <property type="match status" value="1"/>
</dbReference>
<dbReference type="InterPro" id="IPR014284">
    <property type="entry name" value="RNA_pol_sigma-70_dom"/>
</dbReference>
<dbReference type="InterPro" id="IPR000943">
    <property type="entry name" value="RNA_pol_sigma70"/>
</dbReference>
<dbReference type="InterPro" id="IPR009042">
    <property type="entry name" value="RNA_pol_sigma70_r1_2"/>
</dbReference>
<dbReference type="InterPro" id="IPR007627">
    <property type="entry name" value="RNA_pol_sigma70_r2"/>
</dbReference>
<dbReference type="InterPro" id="IPR007624">
    <property type="entry name" value="RNA_pol_sigma70_r3"/>
</dbReference>
<dbReference type="InterPro" id="IPR007630">
    <property type="entry name" value="RNA_pol_sigma70_r4"/>
</dbReference>
<dbReference type="InterPro" id="IPR007127">
    <property type="entry name" value="RNA_pol_sigma_70_r1_1"/>
</dbReference>
<dbReference type="InterPro" id="IPR042189">
    <property type="entry name" value="RNA_pol_sigma_70_r1_1_sf"/>
</dbReference>
<dbReference type="InterPro" id="IPR013325">
    <property type="entry name" value="RNA_pol_sigma_r2"/>
</dbReference>
<dbReference type="InterPro" id="IPR013324">
    <property type="entry name" value="RNA_pol_sigma_r3/r4-like"/>
</dbReference>
<dbReference type="InterPro" id="IPR012760">
    <property type="entry name" value="RNA_pol_sigma_RpoD_C"/>
</dbReference>
<dbReference type="InterPro" id="IPR050239">
    <property type="entry name" value="Sigma-70_RNA_pol_init_factors"/>
</dbReference>
<dbReference type="InterPro" id="IPR028630">
    <property type="entry name" value="Sigma70_RpoD"/>
</dbReference>
<dbReference type="InterPro" id="IPR036388">
    <property type="entry name" value="WH-like_DNA-bd_sf"/>
</dbReference>
<dbReference type="NCBIfam" id="NF006666">
    <property type="entry name" value="PRK09210.1"/>
    <property type="match status" value="1"/>
</dbReference>
<dbReference type="NCBIfam" id="TIGR02393">
    <property type="entry name" value="RpoD_Cterm"/>
    <property type="match status" value="1"/>
</dbReference>
<dbReference type="NCBIfam" id="TIGR02937">
    <property type="entry name" value="sigma70-ECF"/>
    <property type="match status" value="1"/>
</dbReference>
<dbReference type="PANTHER" id="PTHR30603">
    <property type="entry name" value="RNA POLYMERASE SIGMA FACTOR RPO"/>
    <property type="match status" value="1"/>
</dbReference>
<dbReference type="PANTHER" id="PTHR30603:SF60">
    <property type="entry name" value="RNA POLYMERASE SIGMA FACTOR RPOD"/>
    <property type="match status" value="1"/>
</dbReference>
<dbReference type="Pfam" id="PF03979">
    <property type="entry name" value="Sigma70_r1_1"/>
    <property type="match status" value="1"/>
</dbReference>
<dbReference type="Pfam" id="PF00140">
    <property type="entry name" value="Sigma70_r1_2"/>
    <property type="match status" value="1"/>
</dbReference>
<dbReference type="Pfam" id="PF04542">
    <property type="entry name" value="Sigma70_r2"/>
    <property type="match status" value="1"/>
</dbReference>
<dbReference type="Pfam" id="PF04539">
    <property type="entry name" value="Sigma70_r3"/>
    <property type="match status" value="1"/>
</dbReference>
<dbReference type="Pfam" id="PF04545">
    <property type="entry name" value="Sigma70_r4"/>
    <property type="match status" value="1"/>
</dbReference>
<dbReference type="PRINTS" id="PR00046">
    <property type="entry name" value="SIGMA70FCT"/>
</dbReference>
<dbReference type="SUPFAM" id="SSF88946">
    <property type="entry name" value="Sigma2 domain of RNA polymerase sigma factors"/>
    <property type="match status" value="1"/>
</dbReference>
<dbReference type="SUPFAM" id="SSF88659">
    <property type="entry name" value="Sigma3 and sigma4 domains of RNA polymerase sigma factors"/>
    <property type="match status" value="2"/>
</dbReference>
<dbReference type="PROSITE" id="PS00715">
    <property type="entry name" value="SIGMA70_1"/>
    <property type="match status" value="1"/>
</dbReference>
<dbReference type="PROSITE" id="PS00716">
    <property type="entry name" value="SIGMA70_2"/>
    <property type="match status" value="1"/>
</dbReference>
<feature type="chain" id="PRO_0000093918" description="RNA polymerase sigma factor SigA">
    <location>
        <begin position="1"/>
        <end position="368"/>
    </location>
</feature>
<feature type="DNA-binding region" description="H-T-H motif" evidence="1">
    <location>
        <begin position="329"/>
        <end position="348"/>
    </location>
</feature>
<feature type="region of interest" description="Disordered" evidence="2">
    <location>
        <begin position="69"/>
        <end position="90"/>
    </location>
</feature>
<feature type="region of interest" description="Sigma-70 factor domain-2" evidence="1">
    <location>
        <begin position="135"/>
        <end position="205"/>
    </location>
</feature>
<feature type="region of interest" description="Sigma-70 factor domain-3" evidence="1">
    <location>
        <begin position="214"/>
        <end position="290"/>
    </location>
</feature>
<feature type="region of interest" description="Sigma-70 factor domain-4" evidence="1">
    <location>
        <begin position="303"/>
        <end position="356"/>
    </location>
</feature>
<feature type="short sequence motif" description="Interaction with polymerase core subunit RpoC">
    <location>
        <begin position="159"/>
        <end position="162"/>
    </location>
</feature>
<feature type="compositionally biased region" description="Basic and acidic residues" evidence="2">
    <location>
        <begin position="71"/>
        <end position="83"/>
    </location>
</feature>
<comment type="function">
    <text evidence="1">Sigma factors are initiation factors that promote the attachment of RNA polymerase to specific initiation sites and are then released. This sigma factor is the primary sigma factor during exponential growth.</text>
</comment>
<comment type="subunit">
    <text evidence="1">Interacts transiently with the RNA polymerase catalytic core.</text>
</comment>
<comment type="subcellular location">
    <subcellularLocation>
        <location evidence="1">Cytoplasm</location>
    </subcellularLocation>
</comment>
<comment type="similarity">
    <text evidence="1">Belongs to the sigma-70 factor family. RpoD/SigA subfamily.</text>
</comment>
<keyword id="KW-0963">Cytoplasm</keyword>
<keyword id="KW-0238">DNA-binding</keyword>
<keyword id="KW-0731">Sigma factor</keyword>
<keyword id="KW-0804">Transcription</keyword>
<keyword id="KW-0805">Transcription regulation</keyword>
<gene>
    <name evidence="1" type="primary">sigA</name>
    <name type="synonym">plaC</name>
    <name type="synonym">rpoD</name>
    <name type="ordered locus">SAS1499</name>
</gene>
<protein>
    <recommendedName>
        <fullName evidence="1">RNA polymerase sigma factor SigA</fullName>
    </recommendedName>
</protein>
<accession>Q6G905</accession>
<evidence type="ECO:0000255" key="1">
    <source>
        <dbReference type="HAMAP-Rule" id="MF_00963"/>
    </source>
</evidence>
<evidence type="ECO:0000256" key="2">
    <source>
        <dbReference type="SAM" id="MobiDB-lite"/>
    </source>
</evidence>